<protein>
    <recommendedName>
        <fullName evidence="1">Glycerol-3-phosphate acyltransferase</fullName>
    </recommendedName>
    <alternativeName>
        <fullName evidence="1">Acyl-PO4 G3P acyltransferase</fullName>
    </alternativeName>
    <alternativeName>
        <fullName evidence="1">Acyl-phosphate--glycerol-3-phosphate acyltransferase</fullName>
    </alternativeName>
    <alternativeName>
        <fullName evidence="1">G3P acyltransferase</fullName>
        <shortName evidence="1">GPAT</shortName>
        <ecNumber evidence="1">2.3.1.275</ecNumber>
    </alternativeName>
    <alternativeName>
        <fullName evidence="1">Lysophosphatidic acid synthase</fullName>
        <shortName evidence="1">LPA synthase</shortName>
    </alternativeName>
</protein>
<comment type="function">
    <text evidence="1">Catalyzes the transfer of an acyl group from acyl-phosphate (acyl-PO(4)) to glycerol-3-phosphate (G3P) to form lysophosphatidic acid (LPA). This enzyme utilizes acyl-phosphate as fatty acyl donor, but not acyl-CoA or acyl-ACP.</text>
</comment>
<comment type="catalytic activity">
    <reaction evidence="1">
        <text>an acyl phosphate + sn-glycerol 3-phosphate = a 1-acyl-sn-glycero-3-phosphate + phosphate</text>
        <dbReference type="Rhea" id="RHEA:34075"/>
        <dbReference type="ChEBI" id="CHEBI:43474"/>
        <dbReference type="ChEBI" id="CHEBI:57597"/>
        <dbReference type="ChEBI" id="CHEBI:57970"/>
        <dbReference type="ChEBI" id="CHEBI:59918"/>
        <dbReference type="EC" id="2.3.1.275"/>
    </reaction>
</comment>
<comment type="pathway">
    <text evidence="1">Lipid metabolism; phospholipid metabolism.</text>
</comment>
<comment type="subunit">
    <text evidence="1">Probably interacts with PlsX.</text>
</comment>
<comment type="subcellular location">
    <subcellularLocation>
        <location evidence="1">Cell inner membrane</location>
        <topology evidence="1">Multi-pass membrane protein</topology>
    </subcellularLocation>
</comment>
<comment type="similarity">
    <text evidence="1">Belongs to the PlsY family.</text>
</comment>
<keyword id="KW-0997">Cell inner membrane</keyword>
<keyword id="KW-1003">Cell membrane</keyword>
<keyword id="KW-0444">Lipid biosynthesis</keyword>
<keyword id="KW-0443">Lipid metabolism</keyword>
<keyword id="KW-0472">Membrane</keyword>
<keyword id="KW-0594">Phospholipid biosynthesis</keyword>
<keyword id="KW-1208">Phospholipid metabolism</keyword>
<keyword id="KW-0808">Transferase</keyword>
<keyword id="KW-0812">Transmembrane</keyword>
<keyword id="KW-1133">Transmembrane helix</keyword>
<evidence type="ECO:0000255" key="1">
    <source>
        <dbReference type="HAMAP-Rule" id="MF_01043"/>
    </source>
</evidence>
<dbReference type="EC" id="2.3.1.275" evidence="1"/>
<dbReference type="EMBL" id="CP000744">
    <property type="protein sequence ID" value="ABR80978.1"/>
    <property type="molecule type" value="Genomic_DNA"/>
</dbReference>
<dbReference type="RefSeq" id="WP_012074167.1">
    <property type="nucleotide sequence ID" value="NC_009656.1"/>
</dbReference>
<dbReference type="SMR" id="A6UZ84"/>
<dbReference type="GeneID" id="77219101"/>
<dbReference type="KEGG" id="pap:PSPA7_0724"/>
<dbReference type="HOGENOM" id="CLU_081254_0_0_6"/>
<dbReference type="UniPathway" id="UPA00085"/>
<dbReference type="Proteomes" id="UP000001582">
    <property type="component" value="Chromosome"/>
</dbReference>
<dbReference type="GO" id="GO:0005886">
    <property type="term" value="C:plasma membrane"/>
    <property type="evidence" value="ECO:0007669"/>
    <property type="project" value="UniProtKB-SubCell"/>
</dbReference>
<dbReference type="GO" id="GO:0043772">
    <property type="term" value="F:acyl-phosphate glycerol-3-phosphate acyltransferase activity"/>
    <property type="evidence" value="ECO:0007669"/>
    <property type="project" value="UniProtKB-UniRule"/>
</dbReference>
<dbReference type="GO" id="GO:0008654">
    <property type="term" value="P:phospholipid biosynthetic process"/>
    <property type="evidence" value="ECO:0007669"/>
    <property type="project" value="UniProtKB-UniRule"/>
</dbReference>
<dbReference type="HAMAP" id="MF_01043">
    <property type="entry name" value="PlsY"/>
    <property type="match status" value="1"/>
</dbReference>
<dbReference type="InterPro" id="IPR003811">
    <property type="entry name" value="G3P_acylTferase_PlsY"/>
</dbReference>
<dbReference type="NCBIfam" id="TIGR00023">
    <property type="entry name" value="glycerol-3-phosphate 1-O-acyltransferase PlsY"/>
    <property type="match status" value="1"/>
</dbReference>
<dbReference type="PANTHER" id="PTHR30309:SF0">
    <property type="entry name" value="GLYCEROL-3-PHOSPHATE ACYLTRANSFERASE-RELATED"/>
    <property type="match status" value="1"/>
</dbReference>
<dbReference type="PANTHER" id="PTHR30309">
    <property type="entry name" value="INNER MEMBRANE PROTEIN YGIH"/>
    <property type="match status" value="1"/>
</dbReference>
<dbReference type="Pfam" id="PF02660">
    <property type="entry name" value="G3P_acyltransf"/>
    <property type="match status" value="1"/>
</dbReference>
<dbReference type="SMART" id="SM01207">
    <property type="entry name" value="G3P_acyltransf"/>
    <property type="match status" value="1"/>
</dbReference>
<accession>A6UZ84</accession>
<gene>
    <name evidence="1" type="primary">plsY</name>
    <name type="ordered locus">PSPA7_0724</name>
</gene>
<sequence>MVWLLAILAYLLGSLSFAVLLSRWFGTQDPRASGSGNPGATNMLRVAGKKLAILTLLGDVGKGLLPVLVARWLGLGVMEEAWVGIAAVIGHLYPLYFNFRGGKGVATAAGMLLGLYPPAVLLAAAAWLLTFKLSRTSSLASLVATPLTLPLLAWQQPGALLPMTVLTALIVWRHRANLRDLFAGRERHF</sequence>
<reference key="1">
    <citation type="submission" date="2007-06" db="EMBL/GenBank/DDBJ databases">
        <authorList>
            <person name="Dodson R.J."/>
            <person name="Harkins D."/>
            <person name="Paulsen I.T."/>
        </authorList>
    </citation>
    <scope>NUCLEOTIDE SEQUENCE [LARGE SCALE GENOMIC DNA]</scope>
    <source>
        <strain>DSM 24068 / PA7</strain>
    </source>
</reference>
<proteinExistence type="inferred from homology"/>
<organism>
    <name type="scientific">Pseudomonas paraeruginosa (strain DSM 24068 / PA7)</name>
    <name type="common">Pseudomonas aeruginosa (strain PA7)</name>
    <dbReference type="NCBI Taxonomy" id="381754"/>
    <lineage>
        <taxon>Bacteria</taxon>
        <taxon>Pseudomonadati</taxon>
        <taxon>Pseudomonadota</taxon>
        <taxon>Gammaproteobacteria</taxon>
        <taxon>Pseudomonadales</taxon>
        <taxon>Pseudomonadaceae</taxon>
        <taxon>Pseudomonas</taxon>
        <taxon>Pseudomonas paraeruginosa</taxon>
    </lineage>
</organism>
<name>PLSY_PSEP7</name>
<feature type="chain" id="PRO_1000064208" description="Glycerol-3-phosphate acyltransferase">
    <location>
        <begin position="1"/>
        <end position="189"/>
    </location>
</feature>
<feature type="transmembrane region" description="Helical" evidence="1">
    <location>
        <begin position="1"/>
        <end position="21"/>
    </location>
</feature>
<feature type="transmembrane region" description="Helical" evidence="1">
    <location>
        <begin position="50"/>
        <end position="70"/>
    </location>
</feature>
<feature type="transmembrane region" description="Helical" evidence="1">
    <location>
        <begin position="72"/>
        <end position="92"/>
    </location>
</feature>
<feature type="transmembrane region" description="Helical" evidence="1">
    <location>
        <begin position="111"/>
        <end position="131"/>
    </location>
</feature>
<feature type="transmembrane region" description="Helical" evidence="1">
    <location>
        <begin position="151"/>
        <end position="171"/>
    </location>
</feature>